<evidence type="ECO:0000255" key="1">
    <source>
        <dbReference type="HAMAP-Rule" id="MF_00823"/>
    </source>
</evidence>
<evidence type="ECO:0000255" key="2">
    <source>
        <dbReference type="PROSITE-ProRule" id="PRU01137"/>
    </source>
</evidence>
<comment type="function">
    <text evidence="1">Component of the acetyl coenzyme A carboxylase (ACC) complex. First, biotin carboxylase catalyzes the carboxylation of biotin on its carrier protein (BCCP) and then the CO(2) group is transferred by the carboxyltransferase to acetyl-CoA to form malonyl-CoA.</text>
</comment>
<comment type="catalytic activity">
    <reaction evidence="1">
        <text>N(6)-carboxybiotinyl-L-lysyl-[protein] + acetyl-CoA = N(6)-biotinyl-L-lysyl-[protein] + malonyl-CoA</text>
        <dbReference type="Rhea" id="RHEA:54728"/>
        <dbReference type="Rhea" id="RHEA-COMP:10505"/>
        <dbReference type="Rhea" id="RHEA-COMP:10506"/>
        <dbReference type="ChEBI" id="CHEBI:57288"/>
        <dbReference type="ChEBI" id="CHEBI:57384"/>
        <dbReference type="ChEBI" id="CHEBI:83144"/>
        <dbReference type="ChEBI" id="CHEBI:83145"/>
        <dbReference type="EC" id="2.1.3.15"/>
    </reaction>
</comment>
<comment type="pathway">
    <text evidence="1">Lipid metabolism; malonyl-CoA biosynthesis; malonyl-CoA from acetyl-CoA: step 1/1.</text>
</comment>
<comment type="subunit">
    <text evidence="1">Acetyl-CoA carboxylase is a heterohexamer composed of biotin carboxyl carrier protein (AccB), biotin carboxylase (AccC) and two subunits each of ACCase subunit alpha (AccA) and ACCase subunit beta (AccD).</text>
</comment>
<comment type="subcellular location">
    <subcellularLocation>
        <location evidence="1">Cytoplasm</location>
    </subcellularLocation>
</comment>
<comment type="similarity">
    <text evidence="1">Belongs to the AccA family.</text>
</comment>
<reference key="1">
    <citation type="journal article" date="2009" name="J. Bacteriol.">
        <title>Genome sequences of three Agrobacterium biovars help elucidate the evolution of multichromosome genomes in bacteria.</title>
        <authorList>
            <person name="Slater S.C."/>
            <person name="Goldman B.S."/>
            <person name="Goodner B."/>
            <person name="Setubal J.C."/>
            <person name="Farrand S.K."/>
            <person name="Nester E.W."/>
            <person name="Burr T.J."/>
            <person name="Banta L."/>
            <person name="Dickerman A.W."/>
            <person name="Paulsen I."/>
            <person name="Otten L."/>
            <person name="Suen G."/>
            <person name="Welch R."/>
            <person name="Almeida N.F."/>
            <person name="Arnold F."/>
            <person name="Burton O.T."/>
            <person name="Du Z."/>
            <person name="Ewing A."/>
            <person name="Godsy E."/>
            <person name="Heisel S."/>
            <person name="Houmiel K.L."/>
            <person name="Jhaveri J."/>
            <person name="Lu J."/>
            <person name="Miller N.M."/>
            <person name="Norton S."/>
            <person name="Chen Q."/>
            <person name="Phoolcharoen W."/>
            <person name="Ohlin V."/>
            <person name="Ondrusek D."/>
            <person name="Pride N."/>
            <person name="Stricklin S.L."/>
            <person name="Sun J."/>
            <person name="Wheeler C."/>
            <person name="Wilson L."/>
            <person name="Zhu H."/>
            <person name="Wood D.W."/>
        </authorList>
    </citation>
    <scope>NUCLEOTIDE SEQUENCE [LARGE SCALE GENOMIC DNA]</scope>
    <source>
        <strain>K84 / ATCC BAA-868</strain>
    </source>
</reference>
<keyword id="KW-0067">ATP-binding</keyword>
<keyword id="KW-0963">Cytoplasm</keyword>
<keyword id="KW-0275">Fatty acid biosynthesis</keyword>
<keyword id="KW-0276">Fatty acid metabolism</keyword>
<keyword id="KW-0444">Lipid biosynthesis</keyword>
<keyword id="KW-0443">Lipid metabolism</keyword>
<keyword id="KW-0547">Nucleotide-binding</keyword>
<keyword id="KW-0808">Transferase</keyword>
<dbReference type="EC" id="2.1.3.15" evidence="1"/>
<dbReference type="EMBL" id="CP000628">
    <property type="protein sequence ID" value="ACM27986.1"/>
    <property type="molecule type" value="Genomic_DNA"/>
</dbReference>
<dbReference type="RefSeq" id="WP_012652597.1">
    <property type="nucleotide sequence ID" value="NC_011985.1"/>
</dbReference>
<dbReference type="SMR" id="B9JBU0"/>
<dbReference type="STRING" id="311403.Arad_4239"/>
<dbReference type="KEGG" id="ara:Arad_4239"/>
<dbReference type="eggNOG" id="COG0825">
    <property type="taxonomic scope" value="Bacteria"/>
</dbReference>
<dbReference type="HOGENOM" id="CLU_015486_0_2_5"/>
<dbReference type="UniPathway" id="UPA00655">
    <property type="reaction ID" value="UER00711"/>
</dbReference>
<dbReference type="Proteomes" id="UP000001600">
    <property type="component" value="Chromosome 1"/>
</dbReference>
<dbReference type="GO" id="GO:0009317">
    <property type="term" value="C:acetyl-CoA carboxylase complex"/>
    <property type="evidence" value="ECO:0007669"/>
    <property type="project" value="InterPro"/>
</dbReference>
<dbReference type="GO" id="GO:0003989">
    <property type="term" value="F:acetyl-CoA carboxylase activity"/>
    <property type="evidence" value="ECO:0007669"/>
    <property type="project" value="InterPro"/>
</dbReference>
<dbReference type="GO" id="GO:0005524">
    <property type="term" value="F:ATP binding"/>
    <property type="evidence" value="ECO:0007669"/>
    <property type="project" value="UniProtKB-KW"/>
</dbReference>
<dbReference type="GO" id="GO:0016743">
    <property type="term" value="F:carboxyl- or carbamoyltransferase activity"/>
    <property type="evidence" value="ECO:0007669"/>
    <property type="project" value="UniProtKB-UniRule"/>
</dbReference>
<dbReference type="GO" id="GO:0006633">
    <property type="term" value="P:fatty acid biosynthetic process"/>
    <property type="evidence" value="ECO:0007669"/>
    <property type="project" value="UniProtKB-KW"/>
</dbReference>
<dbReference type="GO" id="GO:2001295">
    <property type="term" value="P:malonyl-CoA biosynthetic process"/>
    <property type="evidence" value="ECO:0007669"/>
    <property type="project" value="UniProtKB-UniRule"/>
</dbReference>
<dbReference type="Gene3D" id="3.90.226.10">
    <property type="entry name" value="2-enoyl-CoA Hydratase, Chain A, domain 1"/>
    <property type="match status" value="1"/>
</dbReference>
<dbReference type="HAMAP" id="MF_00823">
    <property type="entry name" value="AcetylCoA_CT_alpha"/>
    <property type="match status" value="1"/>
</dbReference>
<dbReference type="InterPro" id="IPR001095">
    <property type="entry name" value="Acetyl_CoA_COase_a_su"/>
</dbReference>
<dbReference type="InterPro" id="IPR029045">
    <property type="entry name" value="ClpP/crotonase-like_dom_sf"/>
</dbReference>
<dbReference type="InterPro" id="IPR011763">
    <property type="entry name" value="COA_CT_C"/>
</dbReference>
<dbReference type="NCBIfam" id="TIGR00513">
    <property type="entry name" value="accA"/>
    <property type="match status" value="1"/>
</dbReference>
<dbReference type="NCBIfam" id="NF041504">
    <property type="entry name" value="AccA_sub"/>
    <property type="match status" value="1"/>
</dbReference>
<dbReference type="NCBIfam" id="NF004344">
    <property type="entry name" value="PRK05724.1"/>
    <property type="match status" value="1"/>
</dbReference>
<dbReference type="PANTHER" id="PTHR42853">
    <property type="entry name" value="ACETYL-COENZYME A CARBOXYLASE CARBOXYL TRANSFERASE SUBUNIT ALPHA"/>
    <property type="match status" value="1"/>
</dbReference>
<dbReference type="PANTHER" id="PTHR42853:SF3">
    <property type="entry name" value="ACETYL-COENZYME A CARBOXYLASE CARBOXYL TRANSFERASE SUBUNIT ALPHA, CHLOROPLASTIC"/>
    <property type="match status" value="1"/>
</dbReference>
<dbReference type="Pfam" id="PF03255">
    <property type="entry name" value="ACCA"/>
    <property type="match status" value="1"/>
</dbReference>
<dbReference type="PRINTS" id="PR01069">
    <property type="entry name" value="ACCCTRFRASEA"/>
</dbReference>
<dbReference type="SUPFAM" id="SSF52096">
    <property type="entry name" value="ClpP/crotonase"/>
    <property type="match status" value="1"/>
</dbReference>
<dbReference type="PROSITE" id="PS50989">
    <property type="entry name" value="COA_CT_CTER"/>
    <property type="match status" value="1"/>
</dbReference>
<sequence length="317" mass="34583">MHNYLDFEKPISDLEGKIHELKKLASEDESIDTSDEVGRLEIRVRESMADIYSKLNAWQKTQVARHPQRPHFVDYAKALFTEFTPLAGDRKFSEDAAIQAGFARFRGQPVAVLGQEKGNDTKSRLKHNFGSARPEGYRKAIRILEMADRFQLPVITLVDTAGAYPGVGAEERGQAEAIARSTEMCLGLKVPIISVVIGEGGSGGAIAIAVGNRVYMLEHSIYSVISPEGAASILWRDSTRAKEAATNMKITAEDLKGLGIIDGIIPEPLGGAHRDPQTVIAAAGDVISNALGELSSRSGEQLRSDRRQKFLNMGRNL</sequence>
<proteinExistence type="inferred from homology"/>
<accession>B9JBU0</accession>
<organism>
    <name type="scientific">Rhizobium rhizogenes (strain K84 / ATCC BAA-868)</name>
    <name type="common">Agrobacterium radiobacter</name>
    <dbReference type="NCBI Taxonomy" id="311403"/>
    <lineage>
        <taxon>Bacteria</taxon>
        <taxon>Pseudomonadati</taxon>
        <taxon>Pseudomonadota</taxon>
        <taxon>Alphaproteobacteria</taxon>
        <taxon>Hyphomicrobiales</taxon>
        <taxon>Rhizobiaceae</taxon>
        <taxon>Rhizobium/Agrobacterium group</taxon>
        <taxon>Rhizobium</taxon>
    </lineage>
</organism>
<protein>
    <recommendedName>
        <fullName evidence="1">Acetyl-coenzyme A carboxylase carboxyl transferase subunit alpha</fullName>
        <shortName evidence="1">ACCase subunit alpha</shortName>
        <shortName evidence="1">Acetyl-CoA carboxylase carboxyltransferase subunit alpha</shortName>
        <ecNumber evidence="1">2.1.3.15</ecNumber>
    </recommendedName>
</protein>
<name>ACCA_RHIR8</name>
<feature type="chain" id="PRO_1000148728" description="Acetyl-coenzyme A carboxylase carboxyl transferase subunit alpha">
    <location>
        <begin position="1"/>
        <end position="317"/>
    </location>
</feature>
<feature type="domain" description="CoA carboxyltransferase C-terminal" evidence="2">
    <location>
        <begin position="43"/>
        <end position="293"/>
    </location>
</feature>
<gene>
    <name evidence="1" type="primary">accA</name>
    <name type="ordered locus">Arad_4239</name>
</gene>